<gene>
    <name evidence="1" type="primary">groEL</name>
    <name evidence="1" type="synonym">groL</name>
    <name type="synonym">hsp60</name>
    <name type="synonym">mopA</name>
</gene>
<proteinExistence type="inferred from homology"/>
<sequence>MAAKEVKFGDSARKKMLVGVNVLADAVKATLGPKGRNVVLEKSFGAPTITKDGVSVAKEIELKDRFENMGAQLVKDVASKANDEAGDGTTTATVLAQAIVNEGLKAVAAGMNPMDLKRGIDKATIAIVAELKNLAKPCTDSKAIAQVGTISANSDSSIGDIIAEAMERVGKEGVITVEEGSGLENELSVVEGMQFDRGYLSPYFINKPDTMVAELDSPLLLLVDKKISNIRELLPVLEAVAKAGRPLLIVAEDVEGEALATLVVNNMRGIVKVAAVKAPGFGDRRKAMLQDIAILTGGTVISEEVGLSLETATLEHLGNAKRVVLNKENTTIIDGAGQQADIEARVAQIRKQVEDTTSDYDKEKLQERLAKLAGGVAVIKVGAGTEVEMKEKKARVEDALHATRAAVEEGVVPGGGVAWVRALQAISELKGENEDQNVGIALLRRAVEAPLRQIVTNAGGEPSVVVDKVKQGEGNYGFNAASDTYGDMIEMGILDPAKVTRSALQAAASIGSLMITTEAMIAEVAEDKAAGGMPDMGGMGGMGGMGGMGGMM</sequence>
<comment type="function">
    <text evidence="1">Together with its co-chaperonin GroES, plays an essential role in assisting protein folding. The GroEL-GroES system forms a nano-cage that allows encapsulation of the non-native substrate proteins and provides a physical environment optimized to promote and accelerate protein folding.</text>
</comment>
<comment type="catalytic activity">
    <reaction evidence="1">
        <text>ATP + H2O + a folded polypeptide = ADP + phosphate + an unfolded polypeptide.</text>
        <dbReference type="EC" id="5.6.1.7"/>
    </reaction>
</comment>
<comment type="subunit">
    <text evidence="1">Forms a cylinder of 14 subunits composed of two heptameric rings stacked back-to-back. Interacts with the co-chaperonin GroES.</text>
</comment>
<comment type="subcellular location">
    <subcellularLocation>
        <location evidence="1">Cytoplasm</location>
    </subcellularLocation>
</comment>
<comment type="similarity">
    <text evidence="1">Belongs to the chaperonin (HSP60) family.</text>
</comment>
<evidence type="ECO:0000255" key="1">
    <source>
        <dbReference type="HAMAP-Rule" id="MF_00600"/>
    </source>
</evidence>
<protein>
    <recommendedName>
        <fullName evidence="1">Chaperonin GroEL</fullName>
        <ecNumber evidence="1">5.6.1.7</ecNumber>
    </recommendedName>
    <alternativeName>
        <fullName evidence="1">60 kDa chaperonin</fullName>
    </alternativeName>
    <alternativeName>
        <fullName evidence="1">Chaperonin-60</fullName>
        <shortName evidence="1">Cpn60</shortName>
    </alternativeName>
</protein>
<feature type="chain" id="PRO_0000063490" description="Chaperonin GroEL">
    <location>
        <begin position="1"/>
        <end position="552"/>
    </location>
</feature>
<feature type="binding site" evidence="1">
    <location>
        <begin position="30"/>
        <end position="33"/>
    </location>
    <ligand>
        <name>ATP</name>
        <dbReference type="ChEBI" id="CHEBI:30616"/>
    </ligand>
</feature>
<feature type="binding site" evidence="1">
    <location>
        <position position="51"/>
    </location>
    <ligand>
        <name>ATP</name>
        <dbReference type="ChEBI" id="CHEBI:30616"/>
    </ligand>
</feature>
<feature type="binding site" evidence="1">
    <location>
        <begin position="87"/>
        <end position="91"/>
    </location>
    <ligand>
        <name>ATP</name>
        <dbReference type="ChEBI" id="CHEBI:30616"/>
    </ligand>
</feature>
<feature type="binding site" evidence="1">
    <location>
        <position position="415"/>
    </location>
    <ligand>
        <name>ATP</name>
        <dbReference type="ChEBI" id="CHEBI:30616"/>
    </ligand>
</feature>
<feature type="binding site" evidence="1">
    <location>
        <begin position="479"/>
        <end position="481"/>
    </location>
    <ligand>
        <name>ATP</name>
        <dbReference type="ChEBI" id="CHEBI:30616"/>
    </ligand>
</feature>
<feature type="binding site" evidence="1">
    <location>
        <position position="495"/>
    </location>
    <ligand>
        <name>ATP</name>
        <dbReference type="ChEBI" id="CHEBI:30616"/>
    </ligand>
</feature>
<keyword id="KW-0067">ATP-binding</keyword>
<keyword id="KW-0143">Chaperone</keyword>
<keyword id="KW-0963">Cytoplasm</keyword>
<keyword id="KW-0413">Isomerase</keyword>
<keyword id="KW-0547">Nucleotide-binding</keyword>
<name>CH60_STUST</name>
<reference key="1">
    <citation type="journal article" date="1997" name="FEMS Microbiol. Lett.">
        <title>Monoclonal antibody against species-specific epitope of Pseudomonas aeruginosa Hsp60 protein cross-reacts with Pseudomonas stutzeri and other Pseudomonas species.</title>
        <authorList>
            <person name="Lueneberg E."/>
            <person name="Mueller D."/>
            <person name="Steinmetz I."/>
            <person name="Frosch M."/>
        </authorList>
    </citation>
    <scope>NUCLEOTIDE SEQUENCE [GENOMIC DNA]</scope>
    <source>
        <strain>NCTC 11607 / HK 22</strain>
    </source>
</reference>
<dbReference type="EC" id="5.6.1.7" evidence="1"/>
<dbReference type="EMBL" id="Y13828">
    <property type="protein sequence ID" value="CAA74154.1"/>
    <property type="molecule type" value="Genomic_DNA"/>
</dbReference>
<dbReference type="SMR" id="O33500"/>
<dbReference type="eggNOG" id="COG0459">
    <property type="taxonomic scope" value="Bacteria"/>
</dbReference>
<dbReference type="GO" id="GO:0005737">
    <property type="term" value="C:cytoplasm"/>
    <property type="evidence" value="ECO:0007669"/>
    <property type="project" value="UniProtKB-SubCell"/>
</dbReference>
<dbReference type="GO" id="GO:0005524">
    <property type="term" value="F:ATP binding"/>
    <property type="evidence" value="ECO:0007669"/>
    <property type="project" value="UniProtKB-UniRule"/>
</dbReference>
<dbReference type="GO" id="GO:0140662">
    <property type="term" value="F:ATP-dependent protein folding chaperone"/>
    <property type="evidence" value="ECO:0007669"/>
    <property type="project" value="InterPro"/>
</dbReference>
<dbReference type="GO" id="GO:0016853">
    <property type="term" value="F:isomerase activity"/>
    <property type="evidence" value="ECO:0007669"/>
    <property type="project" value="UniProtKB-KW"/>
</dbReference>
<dbReference type="GO" id="GO:0051082">
    <property type="term" value="F:unfolded protein binding"/>
    <property type="evidence" value="ECO:0007669"/>
    <property type="project" value="UniProtKB-UniRule"/>
</dbReference>
<dbReference type="GO" id="GO:0042026">
    <property type="term" value="P:protein refolding"/>
    <property type="evidence" value="ECO:0007669"/>
    <property type="project" value="UniProtKB-UniRule"/>
</dbReference>
<dbReference type="CDD" id="cd03344">
    <property type="entry name" value="GroEL"/>
    <property type="match status" value="1"/>
</dbReference>
<dbReference type="FunFam" id="1.10.560.10:FF:000001">
    <property type="entry name" value="60 kDa chaperonin"/>
    <property type="match status" value="1"/>
</dbReference>
<dbReference type="FunFam" id="3.50.7.10:FF:000001">
    <property type="entry name" value="60 kDa chaperonin"/>
    <property type="match status" value="1"/>
</dbReference>
<dbReference type="Gene3D" id="3.50.7.10">
    <property type="entry name" value="GroEL"/>
    <property type="match status" value="1"/>
</dbReference>
<dbReference type="Gene3D" id="1.10.560.10">
    <property type="entry name" value="GroEL-like equatorial domain"/>
    <property type="match status" value="1"/>
</dbReference>
<dbReference type="Gene3D" id="3.30.260.10">
    <property type="entry name" value="TCP-1-like chaperonin intermediate domain"/>
    <property type="match status" value="1"/>
</dbReference>
<dbReference type="HAMAP" id="MF_00600">
    <property type="entry name" value="CH60"/>
    <property type="match status" value="1"/>
</dbReference>
<dbReference type="InterPro" id="IPR018370">
    <property type="entry name" value="Chaperonin_Cpn60_CS"/>
</dbReference>
<dbReference type="InterPro" id="IPR001844">
    <property type="entry name" value="Cpn60/GroEL"/>
</dbReference>
<dbReference type="InterPro" id="IPR002423">
    <property type="entry name" value="Cpn60/GroEL/TCP-1"/>
</dbReference>
<dbReference type="InterPro" id="IPR027409">
    <property type="entry name" value="GroEL-like_apical_dom_sf"/>
</dbReference>
<dbReference type="InterPro" id="IPR027413">
    <property type="entry name" value="GROEL-like_equatorial_sf"/>
</dbReference>
<dbReference type="InterPro" id="IPR027410">
    <property type="entry name" value="TCP-1-like_intermed_sf"/>
</dbReference>
<dbReference type="NCBIfam" id="TIGR02348">
    <property type="entry name" value="GroEL"/>
    <property type="match status" value="1"/>
</dbReference>
<dbReference type="NCBIfam" id="NF000592">
    <property type="entry name" value="PRK00013.1"/>
    <property type="match status" value="1"/>
</dbReference>
<dbReference type="NCBIfam" id="NF009487">
    <property type="entry name" value="PRK12849.1"/>
    <property type="match status" value="1"/>
</dbReference>
<dbReference type="NCBIfam" id="NF009488">
    <property type="entry name" value="PRK12850.1"/>
    <property type="match status" value="1"/>
</dbReference>
<dbReference type="NCBIfam" id="NF009489">
    <property type="entry name" value="PRK12851.1"/>
    <property type="match status" value="1"/>
</dbReference>
<dbReference type="PANTHER" id="PTHR45633">
    <property type="entry name" value="60 KDA HEAT SHOCK PROTEIN, MITOCHONDRIAL"/>
    <property type="match status" value="1"/>
</dbReference>
<dbReference type="Pfam" id="PF00118">
    <property type="entry name" value="Cpn60_TCP1"/>
    <property type="match status" value="1"/>
</dbReference>
<dbReference type="PRINTS" id="PR00298">
    <property type="entry name" value="CHAPERONIN60"/>
</dbReference>
<dbReference type="SUPFAM" id="SSF52029">
    <property type="entry name" value="GroEL apical domain-like"/>
    <property type="match status" value="1"/>
</dbReference>
<dbReference type="SUPFAM" id="SSF48592">
    <property type="entry name" value="GroEL equatorial domain-like"/>
    <property type="match status" value="1"/>
</dbReference>
<dbReference type="SUPFAM" id="SSF54849">
    <property type="entry name" value="GroEL-intermediate domain like"/>
    <property type="match status" value="1"/>
</dbReference>
<dbReference type="PROSITE" id="PS00296">
    <property type="entry name" value="CHAPERONINS_CPN60"/>
    <property type="match status" value="1"/>
</dbReference>
<accession>O33500</accession>
<organism>
    <name type="scientific">Stutzerimonas stutzeri</name>
    <name type="common">Pseudomonas stutzeri</name>
    <dbReference type="NCBI Taxonomy" id="316"/>
    <lineage>
        <taxon>Bacteria</taxon>
        <taxon>Pseudomonadati</taxon>
        <taxon>Pseudomonadota</taxon>
        <taxon>Gammaproteobacteria</taxon>
        <taxon>Pseudomonadales</taxon>
        <taxon>Pseudomonadaceae</taxon>
        <taxon>Stutzerimonas</taxon>
    </lineage>
</organism>